<comment type="function">
    <text evidence="1">Located at the top of the head of the 30S subunit, it contacts several helices of the 16S rRNA. In the 70S ribosome it contacts the 23S rRNA (bridge B1a) and protein L5 of the 50S subunit (bridge B1b), connecting the 2 subunits; these bridges are implicated in subunit movement. Contacts the tRNAs in the A and P-sites.</text>
</comment>
<comment type="subunit">
    <text evidence="1">Part of the 30S ribosomal subunit. Forms a loose heterodimer with protein S19. Forms two bridges to the 50S subunit in the 70S ribosome.</text>
</comment>
<comment type="similarity">
    <text evidence="1">Belongs to the universal ribosomal protein uS13 family.</text>
</comment>
<evidence type="ECO:0000255" key="1">
    <source>
        <dbReference type="HAMAP-Rule" id="MF_01315"/>
    </source>
</evidence>
<evidence type="ECO:0000256" key="2">
    <source>
        <dbReference type="SAM" id="MobiDB-lite"/>
    </source>
</evidence>
<evidence type="ECO:0000305" key="3"/>
<gene>
    <name evidence="1" type="primary">rpsM</name>
    <name type="ordered locus">SEQ_0079</name>
</gene>
<dbReference type="EMBL" id="FM204883">
    <property type="protein sequence ID" value="CAW92011.1"/>
    <property type="molecule type" value="Genomic_DNA"/>
</dbReference>
<dbReference type="RefSeq" id="WP_012514749.1">
    <property type="nucleotide sequence ID" value="NC_012471.1"/>
</dbReference>
<dbReference type="SMR" id="C0M7C5"/>
<dbReference type="GeneID" id="83703928"/>
<dbReference type="KEGG" id="seu:SEQ_0079"/>
<dbReference type="HOGENOM" id="CLU_103849_1_1_9"/>
<dbReference type="OrthoDB" id="9803610at2"/>
<dbReference type="Proteomes" id="UP000001365">
    <property type="component" value="Chromosome"/>
</dbReference>
<dbReference type="GO" id="GO:0005829">
    <property type="term" value="C:cytosol"/>
    <property type="evidence" value="ECO:0007669"/>
    <property type="project" value="TreeGrafter"/>
</dbReference>
<dbReference type="GO" id="GO:0015935">
    <property type="term" value="C:small ribosomal subunit"/>
    <property type="evidence" value="ECO:0007669"/>
    <property type="project" value="TreeGrafter"/>
</dbReference>
<dbReference type="GO" id="GO:0019843">
    <property type="term" value="F:rRNA binding"/>
    <property type="evidence" value="ECO:0007669"/>
    <property type="project" value="UniProtKB-UniRule"/>
</dbReference>
<dbReference type="GO" id="GO:0003735">
    <property type="term" value="F:structural constituent of ribosome"/>
    <property type="evidence" value="ECO:0007669"/>
    <property type="project" value="InterPro"/>
</dbReference>
<dbReference type="GO" id="GO:0000049">
    <property type="term" value="F:tRNA binding"/>
    <property type="evidence" value="ECO:0007669"/>
    <property type="project" value="UniProtKB-UniRule"/>
</dbReference>
<dbReference type="GO" id="GO:0006412">
    <property type="term" value="P:translation"/>
    <property type="evidence" value="ECO:0007669"/>
    <property type="project" value="UniProtKB-UniRule"/>
</dbReference>
<dbReference type="FunFam" id="1.10.8.50:FF:000001">
    <property type="entry name" value="30S ribosomal protein S13"/>
    <property type="match status" value="1"/>
</dbReference>
<dbReference type="FunFam" id="4.10.910.10:FF:000001">
    <property type="entry name" value="30S ribosomal protein S13"/>
    <property type="match status" value="1"/>
</dbReference>
<dbReference type="Gene3D" id="1.10.8.50">
    <property type="match status" value="1"/>
</dbReference>
<dbReference type="Gene3D" id="4.10.910.10">
    <property type="entry name" value="30s ribosomal protein s13, domain 2"/>
    <property type="match status" value="1"/>
</dbReference>
<dbReference type="HAMAP" id="MF_01315">
    <property type="entry name" value="Ribosomal_uS13"/>
    <property type="match status" value="1"/>
</dbReference>
<dbReference type="InterPro" id="IPR027437">
    <property type="entry name" value="Rbsml_uS13_C"/>
</dbReference>
<dbReference type="InterPro" id="IPR001892">
    <property type="entry name" value="Ribosomal_uS13"/>
</dbReference>
<dbReference type="InterPro" id="IPR010979">
    <property type="entry name" value="Ribosomal_uS13-like_H2TH"/>
</dbReference>
<dbReference type="InterPro" id="IPR019980">
    <property type="entry name" value="Ribosomal_uS13_bac-type"/>
</dbReference>
<dbReference type="InterPro" id="IPR018269">
    <property type="entry name" value="Ribosomal_uS13_CS"/>
</dbReference>
<dbReference type="NCBIfam" id="TIGR03631">
    <property type="entry name" value="uS13_bact"/>
    <property type="match status" value="1"/>
</dbReference>
<dbReference type="PANTHER" id="PTHR10871">
    <property type="entry name" value="30S RIBOSOMAL PROTEIN S13/40S RIBOSOMAL PROTEIN S18"/>
    <property type="match status" value="1"/>
</dbReference>
<dbReference type="PANTHER" id="PTHR10871:SF1">
    <property type="entry name" value="SMALL RIBOSOMAL SUBUNIT PROTEIN US13M"/>
    <property type="match status" value="1"/>
</dbReference>
<dbReference type="Pfam" id="PF00416">
    <property type="entry name" value="Ribosomal_S13"/>
    <property type="match status" value="1"/>
</dbReference>
<dbReference type="PIRSF" id="PIRSF002134">
    <property type="entry name" value="Ribosomal_S13"/>
    <property type="match status" value="1"/>
</dbReference>
<dbReference type="SUPFAM" id="SSF46946">
    <property type="entry name" value="S13-like H2TH domain"/>
    <property type="match status" value="1"/>
</dbReference>
<dbReference type="PROSITE" id="PS00646">
    <property type="entry name" value="RIBOSOMAL_S13_1"/>
    <property type="match status" value="1"/>
</dbReference>
<dbReference type="PROSITE" id="PS50159">
    <property type="entry name" value="RIBOSOMAL_S13_2"/>
    <property type="match status" value="1"/>
</dbReference>
<protein>
    <recommendedName>
        <fullName evidence="1">Small ribosomal subunit protein uS13</fullName>
    </recommendedName>
    <alternativeName>
        <fullName evidence="3">30S ribosomal protein S13</fullName>
    </alternativeName>
</protein>
<sequence length="121" mass="13424">MARIAGVDIPNDKRVVISLTYVYGIGLATSKKILAAAGVSEDIRVKDLTSDQEDAIRREVDTIKVEGDLRREVNLNIKRLMEIGSYRGIRHRRGLPVRGQNTKNNARTRKGKAVAIAGKKK</sequence>
<feature type="chain" id="PRO_1000165638" description="Small ribosomal subunit protein uS13">
    <location>
        <begin position="1"/>
        <end position="121"/>
    </location>
</feature>
<feature type="region of interest" description="Disordered" evidence="2">
    <location>
        <begin position="95"/>
        <end position="121"/>
    </location>
</feature>
<feature type="compositionally biased region" description="Basic residues" evidence="2">
    <location>
        <begin position="106"/>
        <end position="121"/>
    </location>
</feature>
<keyword id="KW-0687">Ribonucleoprotein</keyword>
<keyword id="KW-0689">Ribosomal protein</keyword>
<keyword id="KW-0694">RNA-binding</keyword>
<keyword id="KW-0699">rRNA-binding</keyword>
<keyword id="KW-0820">tRNA-binding</keyword>
<accession>C0M7C5</accession>
<name>RS13_STRE4</name>
<proteinExistence type="inferred from homology"/>
<organism>
    <name type="scientific">Streptococcus equi subsp. equi (strain 4047)</name>
    <dbReference type="NCBI Taxonomy" id="553482"/>
    <lineage>
        <taxon>Bacteria</taxon>
        <taxon>Bacillati</taxon>
        <taxon>Bacillota</taxon>
        <taxon>Bacilli</taxon>
        <taxon>Lactobacillales</taxon>
        <taxon>Streptococcaceae</taxon>
        <taxon>Streptococcus</taxon>
    </lineage>
</organism>
<reference key="1">
    <citation type="journal article" date="2009" name="PLoS Pathog.">
        <title>Genomic evidence for the evolution of Streptococcus equi: host restriction, increased virulence, and genetic exchange with human pathogens.</title>
        <authorList>
            <person name="Holden M.T.G."/>
            <person name="Heather Z."/>
            <person name="Paillot R."/>
            <person name="Steward K.F."/>
            <person name="Webb K."/>
            <person name="Ainslie F."/>
            <person name="Jourdan T."/>
            <person name="Bason N.C."/>
            <person name="Holroyd N.E."/>
            <person name="Mungall K."/>
            <person name="Quail M.A."/>
            <person name="Sanders M."/>
            <person name="Simmonds M."/>
            <person name="Willey D."/>
            <person name="Brooks K."/>
            <person name="Aanensen D.M."/>
            <person name="Spratt B.G."/>
            <person name="Jolley K.A."/>
            <person name="Maiden M.C.J."/>
            <person name="Kehoe M."/>
            <person name="Chanter N."/>
            <person name="Bentley S.D."/>
            <person name="Robinson C."/>
            <person name="Maskell D.J."/>
            <person name="Parkhill J."/>
            <person name="Waller A.S."/>
        </authorList>
    </citation>
    <scope>NUCLEOTIDE SEQUENCE [LARGE SCALE GENOMIC DNA]</scope>
    <source>
        <strain>4047</strain>
    </source>
</reference>